<dbReference type="EMBL" id="CP001233">
    <property type="protein sequence ID" value="ACP06876.1"/>
    <property type="molecule type" value="Genomic_DNA"/>
</dbReference>
<dbReference type="RefSeq" id="WP_000246893.1">
    <property type="nucleotide sequence ID" value="NC_012578.1"/>
</dbReference>
<dbReference type="SMR" id="C3LS89"/>
<dbReference type="GeneID" id="88785215"/>
<dbReference type="KEGG" id="vcm:VCM66_2580"/>
<dbReference type="HOGENOM" id="CLU_074944_0_0_6"/>
<dbReference type="UniPathway" id="UPA00345"/>
<dbReference type="Proteomes" id="UP000001217">
    <property type="component" value="Chromosome I"/>
</dbReference>
<dbReference type="GO" id="GO:0005737">
    <property type="term" value="C:cytoplasm"/>
    <property type="evidence" value="ECO:0007669"/>
    <property type="project" value="UniProtKB-SubCell"/>
</dbReference>
<dbReference type="GO" id="GO:0003746">
    <property type="term" value="F:translation elongation factor activity"/>
    <property type="evidence" value="ECO:0007669"/>
    <property type="project" value="UniProtKB-UniRule"/>
</dbReference>
<dbReference type="GO" id="GO:0043043">
    <property type="term" value="P:peptide biosynthetic process"/>
    <property type="evidence" value="ECO:0007669"/>
    <property type="project" value="InterPro"/>
</dbReference>
<dbReference type="CDD" id="cd04470">
    <property type="entry name" value="S1_EF-P_repeat_1"/>
    <property type="match status" value="1"/>
</dbReference>
<dbReference type="CDD" id="cd05794">
    <property type="entry name" value="S1_EF-P_repeat_2"/>
    <property type="match status" value="1"/>
</dbReference>
<dbReference type="FunFam" id="2.30.30.30:FF:000003">
    <property type="entry name" value="Elongation factor P"/>
    <property type="match status" value="1"/>
</dbReference>
<dbReference type="FunFam" id="2.40.50.140:FF:000004">
    <property type="entry name" value="Elongation factor P"/>
    <property type="match status" value="1"/>
</dbReference>
<dbReference type="FunFam" id="2.40.50.140:FF:000009">
    <property type="entry name" value="Elongation factor P"/>
    <property type="match status" value="1"/>
</dbReference>
<dbReference type="Gene3D" id="2.30.30.30">
    <property type="match status" value="1"/>
</dbReference>
<dbReference type="Gene3D" id="2.40.50.140">
    <property type="entry name" value="Nucleic acid-binding proteins"/>
    <property type="match status" value="2"/>
</dbReference>
<dbReference type="HAMAP" id="MF_00141">
    <property type="entry name" value="EF_P"/>
    <property type="match status" value="1"/>
</dbReference>
<dbReference type="InterPro" id="IPR015365">
    <property type="entry name" value="Elong-fact-P_C"/>
</dbReference>
<dbReference type="InterPro" id="IPR012340">
    <property type="entry name" value="NA-bd_OB-fold"/>
</dbReference>
<dbReference type="InterPro" id="IPR014722">
    <property type="entry name" value="Rib_uL2_dom2"/>
</dbReference>
<dbReference type="InterPro" id="IPR020599">
    <property type="entry name" value="Transl_elong_fac_P/YeiP"/>
</dbReference>
<dbReference type="InterPro" id="IPR013185">
    <property type="entry name" value="Transl_elong_KOW-like"/>
</dbReference>
<dbReference type="InterPro" id="IPR001059">
    <property type="entry name" value="Transl_elong_P/YeiP_cen"/>
</dbReference>
<dbReference type="InterPro" id="IPR013852">
    <property type="entry name" value="Transl_elong_P/YeiP_CS"/>
</dbReference>
<dbReference type="InterPro" id="IPR011768">
    <property type="entry name" value="Transl_elongation_fac_P"/>
</dbReference>
<dbReference type="InterPro" id="IPR008991">
    <property type="entry name" value="Translation_prot_SH3-like_sf"/>
</dbReference>
<dbReference type="NCBIfam" id="TIGR00038">
    <property type="entry name" value="efp"/>
    <property type="match status" value="1"/>
</dbReference>
<dbReference type="NCBIfam" id="NF001810">
    <property type="entry name" value="PRK00529.1"/>
    <property type="match status" value="1"/>
</dbReference>
<dbReference type="PANTHER" id="PTHR30053">
    <property type="entry name" value="ELONGATION FACTOR P"/>
    <property type="match status" value="1"/>
</dbReference>
<dbReference type="PANTHER" id="PTHR30053:SF12">
    <property type="entry name" value="ELONGATION FACTOR P (EF-P) FAMILY PROTEIN"/>
    <property type="match status" value="1"/>
</dbReference>
<dbReference type="Pfam" id="PF01132">
    <property type="entry name" value="EFP"/>
    <property type="match status" value="1"/>
</dbReference>
<dbReference type="Pfam" id="PF08207">
    <property type="entry name" value="EFP_N"/>
    <property type="match status" value="1"/>
</dbReference>
<dbReference type="Pfam" id="PF09285">
    <property type="entry name" value="Elong-fact-P_C"/>
    <property type="match status" value="1"/>
</dbReference>
<dbReference type="PIRSF" id="PIRSF005901">
    <property type="entry name" value="EF-P"/>
    <property type="match status" value="1"/>
</dbReference>
<dbReference type="SMART" id="SM01185">
    <property type="entry name" value="EFP"/>
    <property type="match status" value="1"/>
</dbReference>
<dbReference type="SMART" id="SM00841">
    <property type="entry name" value="Elong-fact-P_C"/>
    <property type="match status" value="1"/>
</dbReference>
<dbReference type="SUPFAM" id="SSF50249">
    <property type="entry name" value="Nucleic acid-binding proteins"/>
    <property type="match status" value="2"/>
</dbReference>
<dbReference type="SUPFAM" id="SSF50104">
    <property type="entry name" value="Translation proteins SH3-like domain"/>
    <property type="match status" value="1"/>
</dbReference>
<dbReference type="PROSITE" id="PS01275">
    <property type="entry name" value="EFP"/>
    <property type="match status" value="1"/>
</dbReference>
<name>EFP_VIBCM</name>
<comment type="function">
    <text evidence="1">Involved in peptide bond synthesis. Alleviates ribosome stalling that occurs when 3 or more consecutive Pro residues or the sequence PPG is present in a protein, possibly by augmenting the peptidyl transferase activity of the ribosome. Modification of Lys-34 is required for alleviation.</text>
</comment>
<comment type="pathway">
    <text evidence="1">Protein biosynthesis; polypeptide chain elongation.</text>
</comment>
<comment type="subcellular location">
    <subcellularLocation>
        <location evidence="1">Cytoplasm</location>
    </subcellularLocation>
</comment>
<comment type="PTM">
    <text evidence="1">May be beta-lysylated on the epsilon-amino group of Lys-34 by the combined action of EpmA and EpmB, and then hydroxylated on the C5 position of the same residue by EpmC (if this protein is present). Lysylation is critical for the stimulatory effect of EF-P on peptide-bond formation. The lysylation moiety may extend toward the peptidyltransferase center and stabilize the terminal 3-CCA end of the tRNA. Hydroxylation of the C5 position on Lys-34 may allow additional potential stabilizing hydrogen-bond interactions with the P-tRNA.</text>
</comment>
<comment type="similarity">
    <text evidence="1">Belongs to the elongation factor P family.</text>
</comment>
<protein>
    <recommendedName>
        <fullName evidence="1">Elongation factor P</fullName>
        <shortName evidence="1">EF-P</shortName>
    </recommendedName>
</protein>
<gene>
    <name evidence="1" type="primary">efp</name>
    <name type="ordered locus">VCM66_2580</name>
</gene>
<sequence length="188" mass="20576">MATVSTNEFKGGLKIMLDNEPCVILENEYVKPGKGQAFNRVRIRKLLTGKVLEKTFKSGDTAEVADVVDIDLDYLYNDGEFYHFMNNSTFEQLAADAKAVGENAKWLVENNTCMLTLWNGNPIAVTPPNFVELEVTETDPGVKGDTQGTGGKPATLSTGAVVRVPLFVQIGEVIKVDTRSAEYVGRVK</sequence>
<evidence type="ECO:0000255" key="1">
    <source>
        <dbReference type="HAMAP-Rule" id="MF_00141"/>
    </source>
</evidence>
<reference key="1">
    <citation type="journal article" date="2008" name="PLoS ONE">
        <title>A recalibrated molecular clock and independent origins for the cholera pandemic clones.</title>
        <authorList>
            <person name="Feng L."/>
            <person name="Reeves P.R."/>
            <person name="Lan R."/>
            <person name="Ren Y."/>
            <person name="Gao C."/>
            <person name="Zhou Z."/>
            <person name="Ren Y."/>
            <person name="Cheng J."/>
            <person name="Wang W."/>
            <person name="Wang J."/>
            <person name="Qian W."/>
            <person name="Li D."/>
            <person name="Wang L."/>
        </authorList>
    </citation>
    <scope>NUCLEOTIDE SEQUENCE [LARGE SCALE GENOMIC DNA]</scope>
    <source>
        <strain>M66-2</strain>
    </source>
</reference>
<accession>C3LS89</accession>
<feature type="chain" id="PRO_1000123037" description="Elongation factor P">
    <location>
        <begin position="1"/>
        <end position="188"/>
    </location>
</feature>
<feature type="modified residue" description="N6-(3,6-diaminohexanoyl)-5-hydroxylysine" evidence="1">
    <location>
        <position position="34"/>
    </location>
</feature>
<proteinExistence type="inferred from homology"/>
<organism>
    <name type="scientific">Vibrio cholerae serotype O1 (strain M66-2)</name>
    <dbReference type="NCBI Taxonomy" id="579112"/>
    <lineage>
        <taxon>Bacteria</taxon>
        <taxon>Pseudomonadati</taxon>
        <taxon>Pseudomonadota</taxon>
        <taxon>Gammaproteobacteria</taxon>
        <taxon>Vibrionales</taxon>
        <taxon>Vibrionaceae</taxon>
        <taxon>Vibrio</taxon>
    </lineage>
</organism>
<keyword id="KW-0963">Cytoplasm</keyword>
<keyword id="KW-0251">Elongation factor</keyword>
<keyword id="KW-0379">Hydroxylation</keyword>
<keyword id="KW-0648">Protein biosynthesis</keyword>